<accession>A3PAM7</accession>
<reference key="1">
    <citation type="journal article" date="2007" name="PLoS Genet.">
        <title>Patterns and implications of gene gain and loss in the evolution of Prochlorococcus.</title>
        <authorList>
            <person name="Kettler G.C."/>
            <person name="Martiny A.C."/>
            <person name="Huang K."/>
            <person name="Zucker J."/>
            <person name="Coleman M.L."/>
            <person name="Rodrigue S."/>
            <person name="Chen F."/>
            <person name="Lapidus A."/>
            <person name="Ferriera S."/>
            <person name="Johnson J."/>
            <person name="Steglich C."/>
            <person name="Church G.M."/>
            <person name="Richardson P."/>
            <person name="Chisholm S.W."/>
        </authorList>
    </citation>
    <scope>NUCLEOTIDE SEQUENCE [LARGE SCALE GENOMIC DNA]</scope>
    <source>
        <strain>MIT 9301</strain>
    </source>
</reference>
<name>NDHI_PROM0</name>
<organism>
    <name type="scientific">Prochlorococcus marinus (strain MIT 9301)</name>
    <dbReference type="NCBI Taxonomy" id="167546"/>
    <lineage>
        <taxon>Bacteria</taxon>
        <taxon>Bacillati</taxon>
        <taxon>Cyanobacteriota</taxon>
        <taxon>Cyanophyceae</taxon>
        <taxon>Synechococcales</taxon>
        <taxon>Prochlorococcaceae</taxon>
        <taxon>Prochlorococcus</taxon>
    </lineage>
</organism>
<sequence length="208" mass="24214">MKNFLQQINSYIKEAFNAGKYLYNGFSVTFDHLRRRPVTVQYPYEKLIPSERYRGRIHYEFDKCIACEVCVRVCPINLPVVDWVMNKETKKKELRNYSIDFGVCIFCGNCVEYCPTNCLSMTEEYELATFDRHNLNFDNVALGRLPTNVTTDPSVKPLRELAYLPKGVMDPHEVPSSDTRVGKLPEEVYDWMRSESNEKKDKASNPNN</sequence>
<gene>
    <name evidence="1" type="primary">ndhI</name>
    <name type="ordered locus">P9301_01791</name>
</gene>
<protein>
    <recommendedName>
        <fullName evidence="1">NAD(P)H-quinone oxidoreductase subunit I</fullName>
        <ecNumber evidence="1">7.1.1.-</ecNumber>
    </recommendedName>
    <alternativeName>
        <fullName evidence="1">NAD(P)H dehydrogenase I subunit I</fullName>
    </alternativeName>
    <alternativeName>
        <fullName evidence="1">NDH-1 subunit I</fullName>
        <shortName evidence="1">NDH-I</shortName>
    </alternativeName>
</protein>
<comment type="function">
    <text evidence="1">NDH-1 shuttles electrons from an unknown electron donor, via FMN and iron-sulfur (Fe-S) centers, to quinones in the respiratory and/or the photosynthetic chain. The immediate electron acceptor for the enzyme in this species is believed to be plastoquinone. Couples the redox reaction to proton translocation, and thus conserves the redox energy in a proton gradient.</text>
</comment>
<comment type="catalytic activity">
    <reaction evidence="1">
        <text>a plastoquinone + NADH + (n+1) H(+)(in) = a plastoquinol + NAD(+) + n H(+)(out)</text>
        <dbReference type="Rhea" id="RHEA:42608"/>
        <dbReference type="Rhea" id="RHEA-COMP:9561"/>
        <dbReference type="Rhea" id="RHEA-COMP:9562"/>
        <dbReference type="ChEBI" id="CHEBI:15378"/>
        <dbReference type="ChEBI" id="CHEBI:17757"/>
        <dbReference type="ChEBI" id="CHEBI:57540"/>
        <dbReference type="ChEBI" id="CHEBI:57945"/>
        <dbReference type="ChEBI" id="CHEBI:62192"/>
    </reaction>
</comment>
<comment type="catalytic activity">
    <reaction evidence="1">
        <text>a plastoquinone + NADPH + (n+1) H(+)(in) = a plastoquinol + NADP(+) + n H(+)(out)</text>
        <dbReference type="Rhea" id="RHEA:42612"/>
        <dbReference type="Rhea" id="RHEA-COMP:9561"/>
        <dbReference type="Rhea" id="RHEA-COMP:9562"/>
        <dbReference type="ChEBI" id="CHEBI:15378"/>
        <dbReference type="ChEBI" id="CHEBI:17757"/>
        <dbReference type="ChEBI" id="CHEBI:57783"/>
        <dbReference type="ChEBI" id="CHEBI:58349"/>
        <dbReference type="ChEBI" id="CHEBI:62192"/>
    </reaction>
</comment>
<comment type="cofactor">
    <cofactor evidence="1">
        <name>[4Fe-4S] cluster</name>
        <dbReference type="ChEBI" id="CHEBI:49883"/>
    </cofactor>
    <text evidence="1">Binds 2 [4Fe-4S] clusters per subunit.</text>
</comment>
<comment type="subunit">
    <text evidence="1">NDH-1 is composed of at least 11 different subunits.</text>
</comment>
<comment type="subcellular location">
    <subcellularLocation>
        <location evidence="1">Cellular thylakoid membrane</location>
        <topology evidence="1">Peripheral membrane protein</topology>
    </subcellularLocation>
</comment>
<comment type="similarity">
    <text evidence="1">Belongs to the complex I 23 kDa subunit family.</text>
</comment>
<feature type="chain" id="PRO_0000298532" description="NAD(P)H-quinone oxidoreductase subunit I">
    <location>
        <begin position="1"/>
        <end position="208"/>
    </location>
</feature>
<feature type="domain" description="4Fe-4S ferredoxin-type 1" evidence="1">
    <location>
        <begin position="55"/>
        <end position="84"/>
    </location>
</feature>
<feature type="domain" description="4Fe-4S ferredoxin-type 2" evidence="1">
    <location>
        <begin position="95"/>
        <end position="124"/>
    </location>
</feature>
<feature type="binding site" evidence="1">
    <location>
        <position position="64"/>
    </location>
    <ligand>
        <name>[4Fe-4S] cluster</name>
        <dbReference type="ChEBI" id="CHEBI:49883"/>
        <label>1</label>
    </ligand>
</feature>
<feature type="binding site" evidence="1">
    <location>
        <position position="67"/>
    </location>
    <ligand>
        <name>[4Fe-4S] cluster</name>
        <dbReference type="ChEBI" id="CHEBI:49883"/>
        <label>1</label>
    </ligand>
</feature>
<feature type="binding site" evidence="1">
    <location>
        <position position="70"/>
    </location>
    <ligand>
        <name>[4Fe-4S] cluster</name>
        <dbReference type="ChEBI" id="CHEBI:49883"/>
        <label>1</label>
    </ligand>
</feature>
<feature type="binding site" evidence="1">
    <location>
        <position position="74"/>
    </location>
    <ligand>
        <name>[4Fe-4S] cluster</name>
        <dbReference type="ChEBI" id="CHEBI:49883"/>
        <label>2</label>
    </ligand>
</feature>
<feature type="binding site" evidence="1">
    <location>
        <position position="104"/>
    </location>
    <ligand>
        <name>[4Fe-4S] cluster</name>
        <dbReference type="ChEBI" id="CHEBI:49883"/>
        <label>2</label>
    </ligand>
</feature>
<feature type="binding site" evidence="1">
    <location>
        <position position="107"/>
    </location>
    <ligand>
        <name>[4Fe-4S] cluster</name>
        <dbReference type="ChEBI" id="CHEBI:49883"/>
        <label>2</label>
    </ligand>
</feature>
<feature type="binding site" evidence="1">
    <location>
        <position position="110"/>
    </location>
    <ligand>
        <name>[4Fe-4S] cluster</name>
        <dbReference type="ChEBI" id="CHEBI:49883"/>
        <label>2</label>
    </ligand>
</feature>
<feature type="binding site" evidence="1">
    <location>
        <position position="114"/>
    </location>
    <ligand>
        <name>[4Fe-4S] cluster</name>
        <dbReference type="ChEBI" id="CHEBI:49883"/>
        <label>1</label>
    </ligand>
</feature>
<keyword id="KW-0004">4Fe-4S</keyword>
<keyword id="KW-0408">Iron</keyword>
<keyword id="KW-0411">Iron-sulfur</keyword>
<keyword id="KW-0472">Membrane</keyword>
<keyword id="KW-0479">Metal-binding</keyword>
<keyword id="KW-0520">NAD</keyword>
<keyword id="KW-0521">NADP</keyword>
<keyword id="KW-0618">Plastoquinone</keyword>
<keyword id="KW-0874">Quinone</keyword>
<keyword id="KW-1185">Reference proteome</keyword>
<keyword id="KW-0677">Repeat</keyword>
<keyword id="KW-0793">Thylakoid</keyword>
<keyword id="KW-1278">Translocase</keyword>
<proteinExistence type="inferred from homology"/>
<dbReference type="EC" id="7.1.1.-" evidence="1"/>
<dbReference type="EMBL" id="CP000576">
    <property type="protein sequence ID" value="ABO16802.1"/>
    <property type="molecule type" value="Genomic_DNA"/>
</dbReference>
<dbReference type="RefSeq" id="WP_011862204.1">
    <property type="nucleotide sequence ID" value="NC_009091.1"/>
</dbReference>
<dbReference type="SMR" id="A3PAM7"/>
<dbReference type="STRING" id="167546.P9301_01791"/>
<dbReference type="KEGG" id="pmg:P9301_01791"/>
<dbReference type="eggNOG" id="COG1143">
    <property type="taxonomic scope" value="Bacteria"/>
</dbReference>
<dbReference type="HOGENOM" id="CLU_122804_0_0_3"/>
<dbReference type="OrthoDB" id="9798098at2"/>
<dbReference type="Proteomes" id="UP000001430">
    <property type="component" value="Chromosome"/>
</dbReference>
<dbReference type="GO" id="GO:0031676">
    <property type="term" value="C:plasma membrane-derived thylakoid membrane"/>
    <property type="evidence" value="ECO:0007669"/>
    <property type="project" value="UniProtKB-SubCell"/>
</dbReference>
<dbReference type="GO" id="GO:0051539">
    <property type="term" value="F:4 iron, 4 sulfur cluster binding"/>
    <property type="evidence" value="ECO:0007669"/>
    <property type="project" value="UniProtKB-KW"/>
</dbReference>
<dbReference type="GO" id="GO:0005506">
    <property type="term" value="F:iron ion binding"/>
    <property type="evidence" value="ECO:0007669"/>
    <property type="project" value="UniProtKB-UniRule"/>
</dbReference>
<dbReference type="GO" id="GO:0008137">
    <property type="term" value="F:NADH dehydrogenase (ubiquinone) activity"/>
    <property type="evidence" value="ECO:0007669"/>
    <property type="project" value="InterPro"/>
</dbReference>
<dbReference type="GO" id="GO:0048038">
    <property type="term" value="F:quinone binding"/>
    <property type="evidence" value="ECO:0007669"/>
    <property type="project" value="UniProtKB-KW"/>
</dbReference>
<dbReference type="GO" id="GO:0019684">
    <property type="term" value="P:photosynthesis, light reaction"/>
    <property type="evidence" value="ECO:0007669"/>
    <property type="project" value="UniProtKB-UniRule"/>
</dbReference>
<dbReference type="Gene3D" id="3.30.70.3270">
    <property type="match status" value="1"/>
</dbReference>
<dbReference type="HAMAP" id="MF_01351">
    <property type="entry name" value="NDH1_NuoI"/>
    <property type="match status" value="1"/>
</dbReference>
<dbReference type="InterPro" id="IPR017896">
    <property type="entry name" value="4Fe4S_Fe-S-bd"/>
</dbReference>
<dbReference type="InterPro" id="IPR017900">
    <property type="entry name" value="4Fe4S_Fe_S_CS"/>
</dbReference>
<dbReference type="InterPro" id="IPR010226">
    <property type="entry name" value="NADH_quinone_OxRdtase_chainI"/>
</dbReference>
<dbReference type="InterPro" id="IPR004497">
    <property type="entry name" value="NDHI"/>
</dbReference>
<dbReference type="NCBIfam" id="TIGR00403">
    <property type="entry name" value="ndhI"/>
    <property type="match status" value="1"/>
</dbReference>
<dbReference type="NCBIfam" id="TIGR01971">
    <property type="entry name" value="NuoI"/>
    <property type="match status" value="1"/>
</dbReference>
<dbReference type="NCBIfam" id="NF004537">
    <property type="entry name" value="PRK05888.1-3"/>
    <property type="match status" value="1"/>
</dbReference>
<dbReference type="PANTHER" id="PTHR47275">
    <property type="entry name" value="NAD(P)H-QUINONE OXIDOREDUCTASE SUBUNIT I, CHLOROPLASTIC"/>
    <property type="match status" value="1"/>
</dbReference>
<dbReference type="PANTHER" id="PTHR47275:SF1">
    <property type="entry name" value="NAD(P)H-QUINONE OXIDOREDUCTASE SUBUNIT I, CHLOROPLASTIC"/>
    <property type="match status" value="1"/>
</dbReference>
<dbReference type="Pfam" id="PF12838">
    <property type="entry name" value="Fer4_7"/>
    <property type="match status" value="1"/>
</dbReference>
<dbReference type="SUPFAM" id="SSF54862">
    <property type="entry name" value="4Fe-4S ferredoxins"/>
    <property type="match status" value="1"/>
</dbReference>
<dbReference type="PROSITE" id="PS00198">
    <property type="entry name" value="4FE4S_FER_1"/>
    <property type="match status" value="2"/>
</dbReference>
<dbReference type="PROSITE" id="PS51379">
    <property type="entry name" value="4FE4S_FER_2"/>
    <property type="match status" value="2"/>
</dbReference>
<evidence type="ECO:0000255" key="1">
    <source>
        <dbReference type="HAMAP-Rule" id="MF_01351"/>
    </source>
</evidence>